<reference key="1">
    <citation type="journal article" date="2014" name="Biochimie">
        <title>Linear antimicrobial peptides from Ectatomma quadridens ant venom.</title>
        <authorList>
            <person name="Pluzhnikov K.A."/>
            <person name="Kozlov S.A."/>
            <person name="Vassilevski A.A."/>
            <person name="Vorontsova O.V."/>
            <person name="Feofanov A.V."/>
            <person name="Grishin E.V."/>
        </authorList>
    </citation>
    <scope>PROTEIN SEQUENCE</scope>
    <scope>FUNCTION</scope>
    <scope>SUBCELLULAR LOCATION</scope>
    <scope>MASS SPECTROMETRY</scope>
    <source>
        <tissue>Venom</tissue>
    </source>
</reference>
<reference key="2">
    <citation type="journal article" date="2016" name="Toxins">
        <title>The biochemical toxin arsenal from ant venoms.</title>
        <authorList>
            <person name="Touchard A."/>
            <person name="Aili S.R."/>
            <person name="Fox E.G."/>
            <person name="Escoubas P."/>
            <person name="Orivel J."/>
            <person name="Nicholson G.M."/>
            <person name="Dejean A."/>
        </authorList>
    </citation>
    <scope>REVIEW</scope>
    <scope>NOMENCLATURE</scope>
</reference>
<protein>
    <recommendedName>
        <fullName evidence="3">M-ectatotoxin-Eb2c</fullName>
        <shortName evidence="3">M-ECTX-Eb2c</shortName>
    </recommendedName>
    <alternativeName>
        <fullName evidence="2">Ponericin-Q50</fullName>
    </alternativeName>
</protein>
<evidence type="ECO:0000269" key="1">
    <source>
    </source>
</evidence>
<evidence type="ECO:0000303" key="2">
    <source>
    </source>
</evidence>
<evidence type="ECO:0000303" key="3">
    <source>
    </source>
</evidence>
<evidence type="ECO:0000305" key="4"/>
<evidence type="ECO:0000305" key="5">
    <source>
    </source>
</evidence>
<dbReference type="GO" id="GO:0005576">
    <property type="term" value="C:extracellular region"/>
    <property type="evidence" value="ECO:0007669"/>
    <property type="project" value="UniProtKB-SubCell"/>
</dbReference>
<dbReference type="GO" id="GO:0042742">
    <property type="term" value="P:defense response to bacterium"/>
    <property type="evidence" value="ECO:0007669"/>
    <property type="project" value="UniProtKB-KW"/>
</dbReference>
<name>LTX2C_ECTBR</name>
<sequence length="28" mass="3203">FWGALFKTVAKVVAPFVPDIVKWVQEKV</sequence>
<accession>C0HK47</accession>
<comment type="function">
    <text evidence="1">Antimicrobial peptide active against Gram-negative bacterium E.coli MH1 (MIC=3.5 uM) and P.aeruginosa PAO1 (MIC=10 uM) and against Gram-positive bacterium A.globiformis VKM Ac-1112 (MIC=1.25 uM).</text>
</comment>
<comment type="subcellular location">
    <subcellularLocation>
        <location evidence="1">Secreted</location>
    </subcellularLocation>
</comment>
<comment type="tissue specificity">
    <text evidence="5">Expressed by the venom gland.</text>
</comment>
<comment type="mass spectrometry" mass="3200.6" method="MALDI" evidence="1"/>
<comment type="similarity">
    <text evidence="4">Belongs to the ponericin-Q family.</text>
</comment>
<feature type="peptide" id="PRO_0000437656" description="M-ectatotoxin-Eb2c" evidence="1">
    <location>
        <begin position="1"/>
        <end position="28"/>
    </location>
</feature>
<organism>
    <name type="scientific">Ectatomma brunneum</name>
    <name type="common">Ant</name>
    <name type="synonym">Ectatomma quadridens</name>
    <dbReference type="NCBI Taxonomy" id="369127"/>
    <lineage>
        <taxon>Eukaryota</taxon>
        <taxon>Metazoa</taxon>
        <taxon>Ecdysozoa</taxon>
        <taxon>Arthropoda</taxon>
        <taxon>Hexapoda</taxon>
        <taxon>Insecta</taxon>
        <taxon>Pterygota</taxon>
        <taxon>Neoptera</taxon>
        <taxon>Endopterygota</taxon>
        <taxon>Hymenoptera</taxon>
        <taxon>Apocrita</taxon>
        <taxon>Aculeata</taxon>
        <taxon>Formicoidea</taxon>
        <taxon>Formicidae</taxon>
        <taxon>Ectatomminae</taxon>
        <taxon>Ectatommini</taxon>
        <taxon>Ectatomma</taxon>
    </lineage>
</organism>
<proteinExistence type="evidence at protein level"/>
<keyword id="KW-0044">Antibiotic</keyword>
<keyword id="KW-0929">Antimicrobial</keyword>
<keyword id="KW-0903">Direct protein sequencing</keyword>
<keyword id="KW-0964">Secreted</keyword>